<keyword id="KW-0963">Cytoplasm</keyword>
<keyword id="KW-0238">DNA-binding</keyword>
<keyword id="KW-0804">Transcription</keyword>
<keyword id="KW-0805">Transcription regulation</keyword>
<reference key="1">
    <citation type="journal article" date="2011" name="J. Bacteriol.">
        <title>Complete genome sequence of the Thermophilic Bacterium Exiguobacterium sp. AT1b.</title>
        <authorList>
            <person name="Vishnivetskaya T.A."/>
            <person name="Lucas S."/>
            <person name="Copeland A."/>
            <person name="Lapidus A."/>
            <person name="Glavina del Rio T."/>
            <person name="Dalin E."/>
            <person name="Tice H."/>
            <person name="Bruce D.C."/>
            <person name="Goodwin L.A."/>
            <person name="Pitluck S."/>
            <person name="Saunders E."/>
            <person name="Brettin T."/>
            <person name="Detter C."/>
            <person name="Han C."/>
            <person name="Larimer F."/>
            <person name="Land M.L."/>
            <person name="Hauser L.J."/>
            <person name="Kyrpides N.C."/>
            <person name="Ovchinnikova G."/>
            <person name="Kathariou S."/>
            <person name="Ramaley R.F."/>
            <person name="Rodrigues D.F."/>
            <person name="Hendrix C."/>
            <person name="Richardson P."/>
            <person name="Tiedje J.M."/>
        </authorList>
    </citation>
    <scope>NUCLEOTIDE SEQUENCE [LARGE SCALE GENOMIC DNA]</scope>
    <source>
        <strain>ATCC BAA-1283 / AT1b</strain>
    </source>
</reference>
<comment type="subcellular location">
    <subcellularLocation>
        <location evidence="1">Cytoplasm</location>
    </subcellularLocation>
</comment>
<comment type="similarity">
    <text evidence="1">Belongs to the TACO1 family. YeeN subfamily.</text>
</comment>
<sequence length="237" mass="26408">MGRKWNNIKEKKASKDANTSRVYAKFGREIYVAARQGEPDPELNQSLKFVVERAKTYNVPRAIIDRAIDKAKGGDEENFDELRYEGFGPNGSMVIVDTLTNNVNRTASEVRAAFGKNGGNMGVSGSVAYMFDATAVIGVNEMSADDVLELMMEHDLDVRDVIEEDETVIVYAEPEAFHAVQTAFKAAGVEEFAVAELTMLPQNEVSLDDASQEQFEKLIDVLEDLEDVRQVYHNVEM</sequence>
<feature type="chain" id="PRO_1000212609" description="Probable transcriptional regulatory protein EAT1b_0153">
    <location>
        <begin position="1"/>
        <end position="237"/>
    </location>
</feature>
<proteinExistence type="inferred from homology"/>
<protein>
    <recommendedName>
        <fullName evidence="1">Probable transcriptional regulatory protein EAT1b_0153</fullName>
    </recommendedName>
</protein>
<name>Y153_EXISA</name>
<gene>
    <name type="ordered locus">EAT1b_0153</name>
</gene>
<dbReference type="EMBL" id="CP001615">
    <property type="protein sequence ID" value="ACQ69087.1"/>
    <property type="molecule type" value="Genomic_DNA"/>
</dbReference>
<dbReference type="RefSeq" id="WP_012726206.1">
    <property type="nucleotide sequence ID" value="NC_012673.1"/>
</dbReference>
<dbReference type="SMR" id="C4L1E1"/>
<dbReference type="STRING" id="360911.EAT1b_0153"/>
<dbReference type="KEGG" id="eat:EAT1b_0153"/>
<dbReference type="eggNOG" id="COG0217">
    <property type="taxonomic scope" value="Bacteria"/>
</dbReference>
<dbReference type="HOGENOM" id="CLU_062974_2_0_9"/>
<dbReference type="OrthoDB" id="9781053at2"/>
<dbReference type="Proteomes" id="UP000000716">
    <property type="component" value="Chromosome"/>
</dbReference>
<dbReference type="GO" id="GO:0005829">
    <property type="term" value="C:cytosol"/>
    <property type="evidence" value="ECO:0007669"/>
    <property type="project" value="TreeGrafter"/>
</dbReference>
<dbReference type="GO" id="GO:0003677">
    <property type="term" value="F:DNA binding"/>
    <property type="evidence" value="ECO:0007669"/>
    <property type="project" value="UniProtKB-UniRule"/>
</dbReference>
<dbReference type="GO" id="GO:0006355">
    <property type="term" value="P:regulation of DNA-templated transcription"/>
    <property type="evidence" value="ECO:0007669"/>
    <property type="project" value="UniProtKB-UniRule"/>
</dbReference>
<dbReference type="FunFam" id="1.10.10.200:FF:000003">
    <property type="entry name" value="Probable transcriptional regulatory protein YeeN"/>
    <property type="match status" value="1"/>
</dbReference>
<dbReference type="Gene3D" id="1.10.10.200">
    <property type="match status" value="1"/>
</dbReference>
<dbReference type="Gene3D" id="3.30.70.980">
    <property type="match status" value="2"/>
</dbReference>
<dbReference type="HAMAP" id="MF_00693">
    <property type="entry name" value="Transcrip_reg_TACO1"/>
    <property type="match status" value="1"/>
</dbReference>
<dbReference type="HAMAP" id="MF_00918">
    <property type="entry name" value="Transcrip_reg_TACO1_YeeN"/>
    <property type="match status" value="1"/>
</dbReference>
<dbReference type="InterPro" id="IPR017856">
    <property type="entry name" value="Integrase-like_N"/>
</dbReference>
<dbReference type="InterPro" id="IPR048300">
    <property type="entry name" value="TACO1_YebC-like_2nd/3rd_dom"/>
</dbReference>
<dbReference type="InterPro" id="IPR049083">
    <property type="entry name" value="TACO1_YebC_N"/>
</dbReference>
<dbReference type="InterPro" id="IPR002876">
    <property type="entry name" value="Transcrip_reg_TACO1-like"/>
</dbReference>
<dbReference type="InterPro" id="IPR026564">
    <property type="entry name" value="Transcrip_reg_TACO1-like_dom3"/>
</dbReference>
<dbReference type="InterPro" id="IPR026562">
    <property type="entry name" value="Transcrip_reg_TACO1_YeeN"/>
</dbReference>
<dbReference type="InterPro" id="IPR029072">
    <property type="entry name" value="YebC-like"/>
</dbReference>
<dbReference type="NCBIfam" id="NF001030">
    <property type="entry name" value="PRK00110.1"/>
    <property type="match status" value="1"/>
</dbReference>
<dbReference type="NCBIfam" id="NF009044">
    <property type="entry name" value="PRK12378.1"/>
    <property type="match status" value="1"/>
</dbReference>
<dbReference type="NCBIfam" id="TIGR01033">
    <property type="entry name" value="YebC/PmpR family DNA-binding transcriptional regulator"/>
    <property type="match status" value="1"/>
</dbReference>
<dbReference type="PANTHER" id="PTHR12532">
    <property type="entry name" value="TRANSLATIONAL ACTIVATOR OF CYTOCHROME C OXIDASE 1"/>
    <property type="match status" value="1"/>
</dbReference>
<dbReference type="PANTHER" id="PTHR12532:SF0">
    <property type="entry name" value="TRANSLATIONAL ACTIVATOR OF CYTOCHROME C OXIDASE 1"/>
    <property type="match status" value="1"/>
</dbReference>
<dbReference type="Pfam" id="PF20772">
    <property type="entry name" value="TACO1_YebC_N"/>
    <property type="match status" value="1"/>
</dbReference>
<dbReference type="Pfam" id="PF01709">
    <property type="entry name" value="Transcrip_reg"/>
    <property type="match status" value="1"/>
</dbReference>
<dbReference type="SUPFAM" id="SSF75625">
    <property type="entry name" value="YebC-like"/>
    <property type="match status" value="1"/>
</dbReference>
<accession>C4L1E1</accession>
<organism>
    <name type="scientific">Exiguobacterium sp. (strain ATCC BAA-1283 / AT1b)</name>
    <dbReference type="NCBI Taxonomy" id="360911"/>
    <lineage>
        <taxon>Bacteria</taxon>
        <taxon>Bacillati</taxon>
        <taxon>Bacillota</taxon>
        <taxon>Bacilli</taxon>
        <taxon>Bacillales</taxon>
        <taxon>Bacillales Family XII. Incertae Sedis</taxon>
        <taxon>Exiguobacterium</taxon>
    </lineage>
</organism>
<evidence type="ECO:0000255" key="1">
    <source>
        <dbReference type="HAMAP-Rule" id="MF_00918"/>
    </source>
</evidence>